<comment type="similarity">
    <text evidence="1">Belongs to the UPF0398 family.</text>
</comment>
<reference key="1">
    <citation type="journal article" date="2007" name="J. Bacteriol.">
        <title>The complete genome sequence of the lactic acid bacterial paradigm Lactococcus lactis subsp. cremoris MG1363.</title>
        <authorList>
            <person name="Wegmann U."/>
            <person name="O'Connell-Motherway M."/>
            <person name="Zomer A."/>
            <person name="Buist G."/>
            <person name="Shearman C."/>
            <person name="Canchaya C."/>
            <person name="Ventura M."/>
            <person name="Goesmann A."/>
            <person name="Gasson M.J."/>
            <person name="Kuipers O.P."/>
            <person name="van Sinderen D."/>
            <person name="Kok J."/>
        </authorList>
    </citation>
    <scope>NUCLEOTIDE SEQUENCE [LARGE SCALE GENOMIC DNA]</scope>
    <source>
        <strain>MG1363</strain>
    </source>
</reference>
<evidence type="ECO:0000255" key="1">
    <source>
        <dbReference type="HAMAP-Rule" id="MF_01575"/>
    </source>
</evidence>
<organism>
    <name type="scientific">Lactococcus lactis subsp. cremoris (strain MG1363)</name>
    <dbReference type="NCBI Taxonomy" id="416870"/>
    <lineage>
        <taxon>Bacteria</taxon>
        <taxon>Bacillati</taxon>
        <taxon>Bacillota</taxon>
        <taxon>Bacilli</taxon>
        <taxon>Lactobacillales</taxon>
        <taxon>Streptococcaceae</taxon>
        <taxon>Lactococcus</taxon>
        <taxon>Lactococcus cremoris subsp. cremoris</taxon>
    </lineage>
</organism>
<feature type="chain" id="PRO_1000069214" description="UPF0398 protein llmg_0513">
    <location>
        <begin position="1"/>
        <end position="174"/>
    </location>
</feature>
<proteinExistence type="inferred from homology"/>
<sequence>MNSLLIMGYTSFDLGIFNEKDIKVSIIKKTIKRKLINFLEEGLRWVIFTGNLGFEYWALEVAKELQTDYEFQIGTIFPFETHGQNWNENNQIKLASFKQVDFVKYAFEAYENPGQFRQYNEFLLENTEGSFVFYDEENETKLKYMVEKMKQSSNYEVYLLNFEDLQETFEEMND</sequence>
<gene>
    <name type="ordered locus">llmg_0513</name>
</gene>
<protein>
    <recommendedName>
        <fullName evidence="1">UPF0398 protein llmg_0513</fullName>
    </recommendedName>
</protein>
<name>Y513_LACLM</name>
<dbReference type="EMBL" id="AM406671">
    <property type="protein sequence ID" value="CAL97117.1"/>
    <property type="molecule type" value="Genomic_DNA"/>
</dbReference>
<dbReference type="RefSeq" id="WP_011834551.1">
    <property type="nucleotide sequence ID" value="NC_009004.1"/>
</dbReference>
<dbReference type="SMR" id="A2RIM2"/>
<dbReference type="STRING" id="416870.llmg_0513"/>
<dbReference type="KEGG" id="llm:llmg_0513"/>
<dbReference type="eggNOG" id="COG4474">
    <property type="taxonomic scope" value="Bacteria"/>
</dbReference>
<dbReference type="HOGENOM" id="CLU_105319_0_0_9"/>
<dbReference type="OrthoDB" id="2301957at2"/>
<dbReference type="PhylomeDB" id="A2RIM2"/>
<dbReference type="Proteomes" id="UP000000364">
    <property type="component" value="Chromosome"/>
</dbReference>
<dbReference type="Gene3D" id="3.40.50.450">
    <property type="match status" value="1"/>
</dbReference>
<dbReference type="HAMAP" id="MF_01575">
    <property type="entry name" value="UPF0398"/>
    <property type="match status" value="1"/>
</dbReference>
<dbReference type="InterPro" id="IPR010697">
    <property type="entry name" value="YspA"/>
</dbReference>
<dbReference type="NCBIfam" id="NF010181">
    <property type="entry name" value="PRK13660.1"/>
    <property type="match status" value="1"/>
</dbReference>
<dbReference type="PANTHER" id="PTHR38440:SF1">
    <property type="entry name" value="UPF0398 PROTEIN SPR0331"/>
    <property type="match status" value="1"/>
</dbReference>
<dbReference type="PANTHER" id="PTHR38440">
    <property type="entry name" value="UPF0398 PROTEIN YPSA"/>
    <property type="match status" value="1"/>
</dbReference>
<dbReference type="Pfam" id="PF06908">
    <property type="entry name" value="YpsA"/>
    <property type="match status" value="1"/>
</dbReference>
<dbReference type="PIRSF" id="PIRSF021290">
    <property type="entry name" value="DUF1273"/>
    <property type="match status" value="1"/>
</dbReference>
<dbReference type="SUPFAM" id="SSF102405">
    <property type="entry name" value="MCP/YpsA-like"/>
    <property type="match status" value="1"/>
</dbReference>
<accession>A2RIM2</accession>